<protein>
    <recommendedName>
        <fullName evidence="1">3-phenylpropionate/cinnamic acid dioxygenase ferredoxin subunit</fullName>
    </recommendedName>
</protein>
<name>HCAC_ECO24</name>
<proteinExistence type="inferred from homology"/>
<feature type="chain" id="PRO_0000333718" description="3-phenylpropionate/cinnamic acid dioxygenase ferredoxin subunit">
    <location>
        <begin position="1"/>
        <end position="106"/>
    </location>
</feature>
<feature type="domain" description="Rieske" evidence="1">
    <location>
        <begin position="4"/>
        <end position="99"/>
    </location>
</feature>
<feature type="binding site" evidence="1">
    <location>
        <position position="42"/>
    </location>
    <ligand>
        <name>[2Fe-2S] cluster</name>
        <dbReference type="ChEBI" id="CHEBI:190135"/>
    </ligand>
</feature>
<feature type="binding site" evidence="1">
    <location>
        <position position="44"/>
    </location>
    <ligand>
        <name>[2Fe-2S] cluster</name>
        <dbReference type="ChEBI" id="CHEBI:190135"/>
    </ligand>
</feature>
<feature type="binding site" evidence="1">
    <location>
        <position position="62"/>
    </location>
    <ligand>
        <name>[2Fe-2S] cluster</name>
        <dbReference type="ChEBI" id="CHEBI:190135"/>
    </ligand>
</feature>
<feature type="binding site" evidence="1">
    <location>
        <position position="65"/>
    </location>
    <ligand>
        <name>[2Fe-2S] cluster</name>
        <dbReference type="ChEBI" id="CHEBI:190135"/>
    </ligand>
</feature>
<organism>
    <name type="scientific">Escherichia coli O139:H28 (strain E24377A / ETEC)</name>
    <dbReference type="NCBI Taxonomy" id="331111"/>
    <lineage>
        <taxon>Bacteria</taxon>
        <taxon>Pseudomonadati</taxon>
        <taxon>Pseudomonadota</taxon>
        <taxon>Gammaproteobacteria</taxon>
        <taxon>Enterobacterales</taxon>
        <taxon>Enterobacteriaceae</taxon>
        <taxon>Escherichia</taxon>
    </lineage>
</organism>
<accession>A7ZPY3</accession>
<evidence type="ECO:0000255" key="1">
    <source>
        <dbReference type="HAMAP-Rule" id="MF_01650"/>
    </source>
</evidence>
<keyword id="KW-0001">2Fe-2S</keyword>
<keyword id="KW-0058">Aromatic hydrocarbons catabolism</keyword>
<keyword id="KW-0249">Electron transport</keyword>
<keyword id="KW-0408">Iron</keyword>
<keyword id="KW-0411">Iron-sulfur</keyword>
<keyword id="KW-0479">Metal-binding</keyword>
<keyword id="KW-1185">Reference proteome</keyword>
<keyword id="KW-0813">Transport</keyword>
<gene>
    <name evidence="1" type="primary">hcaC</name>
    <name type="ordered locus">EcE24377A_2825</name>
</gene>
<dbReference type="EMBL" id="CP000800">
    <property type="protein sequence ID" value="ABV16547.1"/>
    <property type="molecule type" value="Genomic_DNA"/>
</dbReference>
<dbReference type="RefSeq" id="WP_001080102.1">
    <property type="nucleotide sequence ID" value="NC_009801.1"/>
</dbReference>
<dbReference type="SMR" id="A7ZPY3"/>
<dbReference type="KEGG" id="ecw:EcE24377A_2825"/>
<dbReference type="HOGENOM" id="CLU_055690_5_2_6"/>
<dbReference type="UniPathway" id="UPA00714"/>
<dbReference type="Proteomes" id="UP000001122">
    <property type="component" value="Chromosome"/>
</dbReference>
<dbReference type="GO" id="GO:0051537">
    <property type="term" value="F:2 iron, 2 sulfur cluster binding"/>
    <property type="evidence" value="ECO:0007669"/>
    <property type="project" value="UniProtKB-KW"/>
</dbReference>
<dbReference type="GO" id="GO:0008695">
    <property type="term" value="F:3-phenylpropionate dioxygenase activity"/>
    <property type="evidence" value="ECO:0007669"/>
    <property type="project" value="UniProtKB-UniRule"/>
</dbReference>
<dbReference type="GO" id="GO:0046872">
    <property type="term" value="F:metal ion binding"/>
    <property type="evidence" value="ECO:0007669"/>
    <property type="project" value="UniProtKB-KW"/>
</dbReference>
<dbReference type="GO" id="GO:0019380">
    <property type="term" value="P:3-phenylpropionate catabolic process"/>
    <property type="evidence" value="ECO:0007669"/>
    <property type="project" value="UniProtKB-UniRule"/>
</dbReference>
<dbReference type="CDD" id="cd03528">
    <property type="entry name" value="Rieske_RO_ferredoxin"/>
    <property type="match status" value="1"/>
</dbReference>
<dbReference type="FunFam" id="2.102.10.10:FF:000005">
    <property type="entry name" value="3-phenylpropionate/cinnamic acid dioxygenase ferredoxin subunit"/>
    <property type="match status" value="1"/>
</dbReference>
<dbReference type="Gene3D" id="2.102.10.10">
    <property type="entry name" value="Rieske [2Fe-2S] iron-sulphur domain"/>
    <property type="match status" value="1"/>
</dbReference>
<dbReference type="HAMAP" id="MF_01650">
    <property type="entry name" value="HcaC"/>
    <property type="match status" value="1"/>
</dbReference>
<dbReference type="InterPro" id="IPR023739">
    <property type="entry name" value="HcaC"/>
</dbReference>
<dbReference type="InterPro" id="IPR017941">
    <property type="entry name" value="Rieske_2Fe-2S"/>
</dbReference>
<dbReference type="InterPro" id="IPR036922">
    <property type="entry name" value="Rieske_2Fe-2S_sf"/>
</dbReference>
<dbReference type="InterPro" id="IPR053387">
    <property type="entry name" value="Ring-hydroxylating_fd"/>
</dbReference>
<dbReference type="NCBIfam" id="NF042948">
    <property type="entry name" value="3PPDioc_HcaC"/>
    <property type="match status" value="1"/>
</dbReference>
<dbReference type="NCBIfam" id="NF007422">
    <property type="entry name" value="PRK09965.1"/>
    <property type="match status" value="1"/>
</dbReference>
<dbReference type="PANTHER" id="PTHR21496:SF23">
    <property type="entry name" value="3-PHENYLPROPIONATE_CINNAMIC ACID DIOXYGENASE FERREDOXIN SUBUNIT"/>
    <property type="match status" value="1"/>
</dbReference>
<dbReference type="PANTHER" id="PTHR21496">
    <property type="entry name" value="FERREDOXIN-RELATED"/>
    <property type="match status" value="1"/>
</dbReference>
<dbReference type="Pfam" id="PF00355">
    <property type="entry name" value="Rieske"/>
    <property type="match status" value="1"/>
</dbReference>
<dbReference type="SUPFAM" id="SSF50022">
    <property type="entry name" value="ISP domain"/>
    <property type="match status" value="1"/>
</dbReference>
<dbReference type="PROSITE" id="PS51296">
    <property type="entry name" value="RIESKE"/>
    <property type="match status" value="1"/>
</dbReference>
<sequence>MNRIYACPVADVPEGEALRIDTSPVIALFNVGGEFYAINDRCSHGNASMSEGYLEDDATVECPLHAASFCLKTGKALCLPATDPLTTYPVHVEGGDIFIDLPEAQP</sequence>
<reference key="1">
    <citation type="journal article" date="2008" name="J. Bacteriol.">
        <title>The pangenome structure of Escherichia coli: comparative genomic analysis of E. coli commensal and pathogenic isolates.</title>
        <authorList>
            <person name="Rasko D.A."/>
            <person name="Rosovitz M.J."/>
            <person name="Myers G.S.A."/>
            <person name="Mongodin E.F."/>
            <person name="Fricke W.F."/>
            <person name="Gajer P."/>
            <person name="Crabtree J."/>
            <person name="Sebaihia M."/>
            <person name="Thomson N.R."/>
            <person name="Chaudhuri R."/>
            <person name="Henderson I.R."/>
            <person name="Sperandio V."/>
            <person name="Ravel J."/>
        </authorList>
    </citation>
    <scope>NUCLEOTIDE SEQUENCE [LARGE SCALE GENOMIC DNA]</scope>
    <source>
        <strain>E24377A / ETEC</strain>
    </source>
</reference>
<comment type="function">
    <text evidence="1">Part of the multicomponent 3-phenylpropionate dioxygenase, that converts 3-phenylpropionic acid (PP) and cinnamic acid (CI) into 3-phenylpropionate-dihydrodiol (PP-dihydrodiol) and cinnamic acid-dihydrodiol (CI-dihydrodiol), respectively. This protein seems to be a 2Fe-2S ferredoxin.</text>
</comment>
<comment type="cofactor">
    <cofactor evidence="1">
        <name>[2Fe-2S] cluster</name>
        <dbReference type="ChEBI" id="CHEBI:190135"/>
    </cofactor>
    <text evidence="1">Binds 1 [2Fe-2S] cluster per subunit.</text>
</comment>
<comment type="pathway">
    <text evidence="1">Aromatic compound metabolism; 3-phenylpropanoate degradation.</text>
</comment>
<comment type="subunit">
    <text evidence="1">This dioxygenase system consists of four proteins: the two subunits of the hydroxylase component (HcaE and HcaF), a ferredoxin (HcaC) and a ferredoxin reductase (HcaD).</text>
</comment>
<comment type="similarity">
    <text evidence="1">Belongs to the bacterial ring-hydroxylating dioxygenase ferredoxin component family.</text>
</comment>